<gene>
    <name evidence="1" type="primary">rpsU</name>
    <name type="ordered locus">Mpe_A1237</name>
</gene>
<accession>A2SF60</accession>
<dbReference type="EMBL" id="CP000555">
    <property type="protein sequence ID" value="ABM94199.1"/>
    <property type="molecule type" value="Genomic_DNA"/>
</dbReference>
<dbReference type="RefSeq" id="WP_011828836.1">
    <property type="nucleotide sequence ID" value="NC_008825.1"/>
</dbReference>
<dbReference type="SMR" id="A2SF60"/>
<dbReference type="STRING" id="420662.Mpe_A1237"/>
<dbReference type="KEGG" id="mpt:Mpe_A1237"/>
<dbReference type="eggNOG" id="COG0828">
    <property type="taxonomic scope" value="Bacteria"/>
</dbReference>
<dbReference type="HOGENOM" id="CLU_159258_1_2_4"/>
<dbReference type="Proteomes" id="UP000000366">
    <property type="component" value="Chromosome"/>
</dbReference>
<dbReference type="GO" id="GO:1990904">
    <property type="term" value="C:ribonucleoprotein complex"/>
    <property type="evidence" value="ECO:0007669"/>
    <property type="project" value="UniProtKB-KW"/>
</dbReference>
<dbReference type="GO" id="GO:0005840">
    <property type="term" value="C:ribosome"/>
    <property type="evidence" value="ECO:0007669"/>
    <property type="project" value="UniProtKB-KW"/>
</dbReference>
<dbReference type="GO" id="GO:0003735">
    <property type="term" value="F:structural constituent of ribosome"/>
    <property type="evidence" value="ECO:0007669"/>
    <property type="project" value="InterPro"/>
</dbReference>
<dbReference type="GO" id="GO:0006412">
    <property type="term" value="P:translation"/>
    <property type="evidence" value="ECO:0007669"/>
    <property type="project" value="UniProtKB-UniRule"/>
</dbReference>
<dbReference type="Gene3D" id="1.20.5.1150">
    <property type="entry name" value="Ribosomal protein S8"/>
    <property type="match status" value="1"/>
</dbReference>
<dbReference type="HAMAP" id="MF_00358">
    <property type="entry name" value="Ribosomal_bS21"/>
    <property type="match status" value="1"/>
</dbReference>
<dbReference type="InterPro" id="IPR001911">
    <property type="entry name" value="Ribosomal_bS21"/>
</dbReference>
<dbReference type="InterPro" id="IPR018278">
    <property type="entry name" value="Ribosomal_bS21_CS"/>
</dbReference>
<dbReference type="InterPro" id="IPR038380">
    <property type="entry name" value="Ribosomal_bS21_sf"/>
</dbReference>
<dbReference type="NCBIfam" id="TIGR00030">
    <property type="entry name" value="S21p"/>
    <property type="match status" value="1"/>
</dbReference>
<dbReference type="PANTHER" id="PTHR21109">
    <property type="entry name" value="MITOCHONDRIAL 28S RIBOSOMAL PROTEIN S21"/>
    <property type="match status" value="1"/>
</dbReference>
<dbReference type="PANTHER" id="PTHR21109:SF22">
    <property type="entry name" value="SMALL RIBOSOMAL SUBUNIT PROTEIN BS21"/>
    <property type="match status" value="1"/>
</dbReference>
<dbReference type="Pfam" id="PF01165">
    <property type="entry name" value="Ribosomal_S21"/>
    <property type="match status" value="1"/>
</dbReference>
<dbReference type="PRINTS" id="PR00976">
    <property type="entry name" value="RIBOSOMALS21"/>
</dbReference>
<dbReference type="PROSITE" id="PS01181">
    <property type="entry name" value="RIBOSOMAL_S21"/>
    <property type="match status" value="1"/>
</dbReference>
<reference key="1">
    <citation type="journal article" date="2007" name="J. Bacteriol.">
        <title>Whole-genome analysis of the methyl tert-butyl ether-degrading beta-proteobacterium Methylibium petroleiphilum PM1.</title>
        <authorList>
            <person name="Kane S.R."/>
            <person name="Chakicherla A.Y."/>
            <person name="Chain P.S.G."/>
            <person name="Schmidt R."/>
            <person name="Shin M.W."/>
            <person name="Legler T.C."/>
            <person name="Scow K.M."/>
            <person name="Larimer F.W."/>
            <person name="Lucas S.M."/>
            <person name="Richardson P.M."/>
            <person name="Hristova K.R."/>
        </authorList>
    </citation>
    <scope>NUCLEOTIDE SEQUENCE [LARGE SCALE GENOMIC DNA]</scope>
    <source>
        <strain>ATCC BAA-1232 / LMG 22953 / PM1</strain>
    </source>
</reference>
<keyword id="KW-1185">Reference proteome</keyword>
<keyword id="KW-0687">Ribonucleoprotein</keyword>
<keyword id="KW-0689">Ribosomal protein</keyword>
<name>RS21_METPP</name>
<comment type="similarity">
    <text evidence="1">Belongs to the bacterial ribosomal protein bS21 family.</text>
</comment>
<protein>
    <recommendedName>
        <fullName evidence="1">Small ribosomal subunit protein bS21</fullName>
    </recommendedName>
    <alternativeName>
        <fullName evidence="2">30S ribosomal protein S21</fullName>
    </alternativeName>
</protein>
<evidence type="ECO:0000255" key="1">
    <source>
        <dbReference type="HAMAP-Rule" id="MF_00358"/>
    </source>
</evidence>
<evidence type="ECO:0000305" key="2"/>
<sequence length="70" mass="8476">MTTVRVKENEPFDVALRRFKRTIEKIGLLTDLRAREFYEKPTAERKRKKAAAVKRHFKRVRSMQLPKKLY</sequence>
<organism>
    <name type="scientific">Methylibium petroleiphilum (strain ATCC BAA-1232 / LMG 22953 / PM1)</name>
    <dbReference type="NCBI Taxonomy" id="420662"/>
    <lineage>
        <taxon>Bacteria</taxon>
        <taxon>Pseudomonadati</taxon>
        <taxon>Pseudomonadota</taxon>
        <taxon>Betaproteobacteria</taxon>
        <taxon>Burkholderiales</taxon>
        <taxon>Sphaerotilaceae</taxon>
        <taxon>Methylibium</taxon>
    </lineage>
</organism>
<proteinExistence type="inferred from homology"/>
<feature type="chain" id="PRO_1000005137" description="Small ribosomal subunit protein bS21">
    <location>
        <begin position="1"/>
        <end position="70"/>
    </location>
</feature>